<proteinExistence type="evidence at transcript level"/>
<dbReference type="EC" id="3.4.22.36" evidence="2"/>
<dbReference type="EMBL" id="U14647">
    <property type="protein sequence ID" value="AAA85812.1"/>
    <property type="molecule type" value="mRNA"/>
</dbReference>
<dbReference type="EMBL" id="U34621">
    <property type="protein sequence ID" value="AAC52259.1"/>
    <property type="molecule type" value="mRNA"/>
</dbReference>
<dbReference type="EMBL" id="S79676">
    <property type="protein sequence ID" value="AAB35431.1"/>
    <property type="molecule type" value="mRNA"/>
</dbReference>
<dbReference type="SMR" id="P43527"/>
<dbReference type="DIP" id="DIP-29840N"/>
<dbReference type="FunCoup" id="P43527">
    <property type="interactions" value="116"/>
</dbReference>
<dbReference type="IntAct" id="P43527">
    <property type="interactions" value="1"/>
</dbReference>
<dbReference type="STRING" id="10116.ENSRNOP00000009993"/>
<dbReference type="MEROPS" id="C14.001"/>
<dbReference type="PhosphoSitePlus" id="P43527"/>
<dbReference type="PaxDb" id="10116-ENSRNOP00000009993"/>
<dbReference type="UCSC" id="RGD:2274">
    <property type="organism name" value="rat"/>
</dbReference>
<dbReference type="AGR" id="RGD:2274"/>
<dbReference type="RGD" id="2274">
    <property type="gene designation" value="Casp1"/>
</dbReference>
<dbReference type="eggNOG" id="KOG3573">
    <property type="taxonomic scope" value="Eukaryota"/>
</dbReference>
<dbReference type="InParanoid" id="P43527"/>
<dbReference type="OrthoDB" id="6097640at2759"/>
<dbReference type="PhylomeDB" id="P43527"/>
<dbReference type="BRENDA" id="3.4.22.36">
    <property type="organism ID" value="5301"/>
</dbReference>
<dbReference type="Reactome" id="R-RNO-168638">
    <property type="pathway name" value="NOD1/2 Signaling Pathway"/>
</dbReference>
<dbReference type="Reactome" id="R-RNO-448706">
    <property type="pathway name" value="Interleukin-1 processing"/>
</dbReference>
<dbReference type="Reactome" id="R-RNO-5620971">
    <property type="pathway name" value="Pyroptosis"/>
</dbReference>
<dbReference type="PRO" id="PR:P43527"/>
<dbReference type="Proteomes" id="UP000002494">
    <property type="component" value="Unplaced"/>
</dbReference>
<dbReference type="GO" id="GO:0097169">
    <property type="term" value="C:AIM2 inflammasome complex"/>
    <property type="evidence" value="ECO:0000250"/>
    <property type="project" value="UniProtKB"/>
</dbReference>
<dbReference type="GO" id="GO:0061702">
    <property type="term" value="C:canonical inflammasome complex"/>
    <property type="evidence" value="ECO:0000266"/>
    <property type="project" value="RGD"/>
</dbReference>
<dbReference type="GO" id="GO:0005737">
    <property type="term" value="C:cytoplasm"/>
    <property type="evidence" value="ECO:0000266"/>
    <property type="project" value="RGD"/>
</dbReference>
<dbReference type="GO" id="GO:0005829">
    <property type="term" value="C:cytosol"/>
    <property type="evidence" value="ECO:0000266"/>
    <property type="project" value="RGD"/>
</dbReference>
<dbReference type="GO" id="GO:0005576">
    <property type="term" value="C:extracellular region"/>
    <property type="evidence" value="ECO:0000266"/>
    <property type="project" value="RGD"/>
</dbReference>
<dbReference type="GO" id="GO:0072557">
    <property type="term" value="C:IPAF inflammasome complex"/>
    <property type="evidence" value="ECO:0000250"/>
    <property type="project" value="UniProtKB"/>
</dbReference>
<dbReference type="GO" id="GO:0005739">
    <property type="term" value="C:mitochondrion"/>
    <property type="evidence" value="ECO:0007669"/>
    <property type="project" value="GOC"/>
</dbReference>
<dbReference type="GO" id="GO:0072558">
    <property type="term" value="C:NLRP1 inflammasome complex"/>
    <property type="evidence" value="ECO:0000250"/>
    <property type="project" value="UniProtKB"/>
</dbReference>
<dbReference type="GO" id="GO:0072559">
    <property type="term" value="C:NLRP3 inflammasome complex"/>
    <property type="evidence" value="ECO:0000250"/>
    <property type="project" value="UniProtKB"/>
</dbReference>
<dbReference type="GO" id="GO:0005886">
    <property type="term" value="C:plasma membrane"/>
    <property type="evidence" value="ECO:0007669"/>
    <property type="project" value="UniProtKB-SubCell"/>
</dbReference>
<dbReference type="GO" id="GO:0097179">
    <property type="term" value="C:protease inhibitor complex"/>
    <property type="evidence" value="ECO:0000266"/>
    <property type="project" value="RGD"/>
</dbReference>
<dbReference type="GO" id="GO:0032991">
    <property type="term" value="C:protein-containing complex"/>
    <property type="evidence" value="ECO:0000314"/>
    <property type="project" value="RGD"/>
</dbReference>
<dbReference type="GO" id="GO:0050700">
    <property type="term" value="F:CARD domain binding"/>
    <property type="evidence" value="ECO:0000266"/>
    <property type="project" value="RGD"/>
</dbReference>
<dbReference type="GO" id="GO:0004197">
    <property type="term" value="F:cysteine-type endopeptidase activity"/>
    <property type="evidence" value="ECO:0000250"/>
    <property type="project" value="UniProtKB"/>
</dbReference>
<dbReference type="GO" id="GO:0019955">
    <property type="term" value="F:cytokine binding"/>
    <property type="evidence" value="ECO:0000266"/>
    <property type="project" value="RGD"/>
</dbReference>
<dbReference type="GO" id="GO:0004175">
    <property type="term" value="F:endopeptidase activity"/>
    <property type="evidence" value="ECO:0000266"/>
    <property type="project" value="RGD"/>
</dbReference>
<dbReference type="GO" id="GO:0042802">
    <property type="term" value="F:identical protein binding"/>
    <property type="evidence" value="ECO:0000266"/>
    <property type="project" value="RGD"/>
</dbReference>
<dbReference type="GO" id="GO:0019900">
    <property type="term" value="F:kinase binding"/>
    <property type="evidence" value="ECO:0000266"/>
    <property type="project" value="RGD"/>
</dbReference>
<dbReference type="GO" id="GO:0008233">
    <property type="term" value="F:peptidase activity"/>
    <property type="evidence" value="ECO:0000266"/>
    <property type="project" value="RGD"/>
</dbReference>
<dbReference type="GO" id="GO:0097110">
    <property type="term" value="F:scaffold protein binding"/>
    <property type="evidence" value="ECO:0000353"/>
    <property type="project" value="RGD"/>
</dbReference>
<dbReference type="GO" id="GO:0140970">
    <property type="term" value="P:AIM2 inflammasome complex assembly"/>
    <property type="evidence" value="ECO:0000266"/>
    <property type="project" value="RGD"/>
</dbReference>
<dbReference type="GO" id="GO:0006915">
    <property type="term" value="P:apoptotic process"/>
    <property type="evidence" value="ECO:0007669"/>
    <property type="project" value="UniProtKB-KW"/>
</dbReference>
<dbReference type="GO" id="GO:0071222">
    <property type="term" value="P:cellular response to lipopolysaccharide"/>
    <property type="evidence" value="ECO:0000266"/>
    <property type="project" value="RGD"/>
</dbReference>
<dbReference type="GO" id="GO:0071260">
    <property type="term" value="P:cellular response to mechanical stimulus"/>
    <property type="evidence" value="ECO:0000266"/>
    <property type="project" value="RGD"/>
</dbReference>
<dbReference type="GO" id="GO:0071346">
    <property type="term" value="P:cellular response to type II interferon"/>
    <property type="evidence" value="ECO:0000266"/>
    <property type="project" value="RGD"/>
</dbReference>
<dbReference type="GO" id="GO:0140447">
    <property type="term" value="P:cytokine precursor processing"/>
    <property type="evidence" value="ECO:0000266"/>
    <property type="project" value="RGD"/>
</dbReference>
<dbReference type="GO" id="GO:0042742">
    <property type="term" value="P:defense response to bacterium"/>
    <property type="evidence" value="ECO:0000266"/>
    <property type="project" value="RGD"/>
</dbReference>
<dbReference type="GO" id="GO:0050829">
    <property type="term" value="P:defense response to Gram-negative bacterium"/>
    <property type="evidence" value="ECO:0000266"/>
    <property type="project" value="RGD"/>
</dbReference>
<dbReference type="GO" id="GO:0030324">
    <property type="term" value="P:lung development"/>
    <property type="evidence" value="ECO:0000270"/>
    <property type="project" value="RGD"/>
</dbReference>
<dbReference type="GO" id="GO:0060081">
    <property type="term" value="P:membrane hyperpolarization"/>
    <property type="evidence" value="ECO:0000266"/>
    <property type="project" value="RGD"/>
</dbReference>
<dbReference type="GO" id="GO:0007613">
    <property type="term" value="P:memory"/>
    <property type="evidence" value="ECO:0000315"/>
    <property type="project" value="RGD"/>
</dbReference>
<dbReference type="GO" id="GO:0001774">
    <property type="term" value="P:microglial cell activation"/>
    <property type="evidence" value="ECO:0000315"/>
    <property type="project" value="RGD"/>
</dbReference>
<dbReference type="GO" id="GO:0007494">
    <property type="term" value="P:midgut development"/>
    <property type="evidence" value="ECO:0000270"/>
    <property type="project" value="RGD"/>
</dbReference>
<dbReference type="GO" id="GO:0051882">
    <property type="term" value="P:mitochondrial depolarization"/>
    <property type="evidence" value="ECO:0000266"/>
    <property type="project" value="RGD"/>
</dbReference>
<dbReference type="GO" id="GO:0007520">
    <property type="term" value="P:myoblast fusion"/>
    <property type="evidence" value="ECO:0000315"/>
    <property type="project" value="RGD"/>
</dbReference>
<dbReference type="GO" id="GO:0043065">
    <property type="term" value="P:positive regulation of apoptotic process"/>
    <property type="evidence" value="ECO:0000315"/>
    <property type="project" value="RGD"/>
</dbReference>
<dbReference type="GO" id="GO:0043123">
    <property type="term" value="P:positive regulation of canonical NF-kappaB signal transduction"/>
    <property type="evidence" value="ECO:0000266"/>
    <property type="project" value="RGD"/>
</dbReference>
<dbReference type="GO" id="GO:0046010">
    <property type="term" value="P:positive regulation of circadian sleep/wake cycle, non-REM sleep"/>
    <property type="evidence" value="ECO:0000315"/>
    <property type="project" value="RGD"/>
</dbReference>
<dbReference type="GO" id="GO:0001819">
    <property type="term" value="P:positive regulation of cytokine production"/>
    <property type="evidence" value="ECO:0000315"/>
    <property type="project" value="RGD"/>
</dbReference>
<dbReference type="GO" id="GO:0050729">
    <property type="term" value="P:positive regulation of inflammatory response"/>
    <property type="evidence" value="ECO:0000266"/>
    <property type="project" value="RGD"/>
</dbReference>
<dbReference type="GO" id="GO:0032730">
    <property type="term" value="P:positive regulation of interleukin-1 alpha production"/>
    <property type="evidence" value="ECO:0000266"/>
    <property type="project" value="RGD"/>
</dbReference>
<dbReference type="GO" id="GO:0032731">
    <property type="term" value="P:positive regulation of interleukin-1 beta production"/>
    <property type="evidence" value="ECO:0000315"/>
    <property type="project" value="RGD"/>
</dbReference>
<dbReference type="GO" id="GO:0032741">
    <property type="term" value="P:positive regulation of interleukin-18 production"/>
    <property type="evidence" value="ECO:0000266"/>
    <property type="project" value="RGD"/>
</dbReference>
<dbReference type="GO" id="GO:0060907">
    <property type="term" value="P:positive regulation of macrophage cytokine production"/>
    <property type="evidence" value="ECO:0000266"/>
    <property type="project" value="RGD"/>
</dbReference>
<dbReference type="GO" id="GO:1903265">
    <property type="term" value="P:positive regulation of tumor necrosis factor-mediated signaling pathway"/>
    <property type="evidence" value="ECO:0000266"/>
    <property type="project" value="RGD"/>
</dbReference>
<dbReference type="GO" id="GO:0097300">
    <property type="term" value="P:programmed necrotic cell death"/>
    <property type="evidence" value="ECO:0000266"/>
    <property type="project" value="RGD"/>
</dbReference>
<dbReference type="GO" id="GO:0016540">
    <property type="term" value="P:protein autoprocessing"/>
    <property type="evidence" value="ECO:0000250"/>
    <property type="project" value="UniProtKB"/>
</dbReference>
<dbReference type="GO" id="GO:0051604">
    <property type="term" value="P:protein maturation"/>
    <property type="evidence" value="ECO:0000266"/>
    <property type="project" value="RGD"/>
</dbReference>
<dbReference type="GO" id="GO:0016485">
    <property type="term" value="P:protein processing"/>
    <property type="evidence" value="ECO:0000266"/>
    <property type="project" value="RGD"/>
</dbReference>
<dbReference type="GO" id="GO:0006508">
    <property type="term" value="P:proteolysis"/>
    <property type="evidence" value="ECO:0000266"/>
    <property type="project" value="RGD"/>
</dbReference>
<dbReference type="GO" id="GO:0070269">
    <property type="term" value="P:pyroptotic inflammatory response"/>
    <property type="evidence" value="ECO:0000250"/>
    <property type="project" value="UniProtKB"/>
</dbReference>
<dbReference type="GO" id="GO:0010506">
    <property type="term" value="P:regulation of autophagy"/>
    <property type="evidence" value="ECO:0000266"/>
    <property type="project" value="RGD"/>
</dbReference>
<dbReference type="GO" id="GO:0050727">
    <property type="term" value="P:regulation of inflammatory response"/>
    <property type="evidence" value="ECO:0000250"/>
    <property type="project" value="UniProtKB"/>
</dbReference>
<dbReference type="GO" id="GO:0033198">
    <property type="term" value="P:response to ATP"/>
    <property type="evidence" value="ECO:0000266"/>
    <property type="project" value="RGD"/>
</dbReference>
<dbReference type="GO" id="GO:0009617">
    <property type="term" value="P:response to bacterium"/>
    <property type="evidence" value="ECO:0000266"/>
    <property type="project" value="RGD"/>
</dbReference>
<dbReference type="GO" id="GO:0001666">
    <property type="term" value="P:response to hypoxia"/>
    <property type="evidence" value="ECO:0000314"/>
    <property type="project" value="RGD"/>
</dbReference>
<dbReference type="GO" id="GO:0032496">
    <property type="term" value="P:response to lipopolysaccharide"/>
    <property type="evidence" value="ECO:0000315"/>
    <property type="project" value="RGD"/>
</dbReference>
<dbReference type="GO" id="GO:1901562">
    <property type="term" value="P:response to paraquat"/>
    <property type="evidence" value="ECO:0000314"/>
    <property type="project" value="RGD"/>
</dbReference>
<dbReference type="GO" id="GO:0009636">
    <property type="term" value="P:response to toxic substance"/>
    <property type="evidence" value="ECO:0000270"/>
    <property type="project" value="RGD"/>
</dbReference>
<dbReference type="GO" id="GO:0009410">
    <property type="term" value="P:response to xenobiotic stimulus"/>
    <property type="evidence" value="ECO:0000314"/>
    <property type="project" value="RGD"/>
</dbReference>
<dbReference type="GO" id="GO:0140448">
    <property type="term" value="P:signaling receptor ligand precursor processing"/>
    <property type="evidence" value="ECO:0000266"/>
    <property type="project" value="RGD"/>
</dbReference>
<dbReference type="CDD" id="cd08325">
    <property type="entry name" value="CARD_CASP1-like"/>
    <property type="match status" value="1"/>
</dbReference>
<dbReference type="CDD" id="cd00032">
    <property type="entry name" value="CASc"/>
    <property type="match status" value="1"/>
</dbReference>
<dbReference type="FunFam" id="1.10.533.10:FF:000031">
    <property type="entry name" value="Caspase 1, isoform CRA_b"/>
    <property type="match status" value="1"/>
</dbReference>
<dbReference type="FunFam" id="3.40.50.1460:FF:000007">
    <property type="entry name" value="Caspase-1"/>
    <property type="match status" value="1"/>
</dbReference>
<dbReference type="Gene3D" id="3.40.50.1460">
    <property type="match status" value="1"/>
</dbReference>
<dbReference type="Gene3D" id="1.10.533.10">
    <property type="entry name" value="Death Domain, Fas"/>
    <property type="match status" value="1"/>
</dbReference>
<dbReference type="InterPro" id="IPR001315">
    <property type="entry name" value="CARD"/>
</dbReference>
<dbReference type="InterPro" id="IPR029030">
    <property type="entry name" value="Caspase-like_dom_sf"/>
</dbReference>
<dbReference type="InterPro" id="IPR033139">
    <property type="entry name" value="Caspase_cys_AS"/>
</dbReference>
<dbReference type="InterPro" id="IPR016129">
    <property type="entry name" value="Caspase_his_AS"/>
</dbReference>
<dbReference type="InterPro" id="IPR011029">
    <property type="entry name" value="DEATH-like_dom_sf"/>
</dbReference>
<dbReference type="InterPro" id="IPR002398">
    <property type="entry name" value="Pept_C14"/>
</dbReference>
<dbReference type="InterPro" id="IPR011600">
    <property type="entry name" value="Pept_C14_caspase"/>
</dbReference>
<dbReference type="InterPro" id="IPR002138">
    <property type="entry name" value="Pept_C14_p10"/>
</dbReference>
<dbReference type="InterPro" id="IPR001309">
    <property type="entry name" value="Pept_C14_p20"/>
</dbReference>
<dbReference type="InterPro" id="IPR015917">
    <property type="entry name" value="Pept_C14A"/>
</dbReference>
<dbReference type="PANTHER" id="PTHR47901">
    <property type="entry name" value="CASPASE RECRUITMENT DOMAIN-CONTAINING PROTEIN 18"/>
    <property type="match status" value="1"/>
</dbReference>
<dbReference type="PANTHER" id="PTHR47901:SF3">
    <property type="entry name" value="CASPASE-1"/>
    <property type="match status" value="1"/>
</dbReference>
<dbReference type="Pfam" id="PF00619">
    <property type="entry name" value="CARD"/>
    <property type="match status" value="1"/>
</dbReference>
<dbReference type="Pfam" id="PF00656">
    <property type="entry name" value="Peptidase_C14"/>
    <property type="match status" value="1"/>
</dbReference>
<dbReference type="PIRSF" id="PIRSF038001">
    <property type="entry name" value="Caspase_ICE"/>
    <property type="match status" value="1"/>
</dbReference>
<dbReference type="PRINTS" id="PR00376">
    <property type="entry name" value="IL1BCENZYME"/>
</dbReference>
<dbReference type="SMART" id="SM00114">
    <property type="entry name" value="CARD"/>
    <property type="match status" value="1"/>
</dbReference>
<dbReference type="SMART" id="SM00115">
    <property type="entry name" value="CASc"/>
    <property type="match status" value="1"/>
</dbReference>
<dbReference type="SUPFAM" id="SSF52129">
    <property type="entry name" value="Caspase-like"/>
    <property type="match status" value="1"/>
</dbReference>
<dbReference type="SUPFAM" id="SSF47986">
    <property type="entry name" value="DEATH domain"/>
    <property type="match status" value="1"/>
</dbReference>
<dbReference type="PROSITE" id="PS50209">
    <property type="entry name" value="CARD"/>
    <property type="match status" value="1"/>
</dbReference>
<dbReference type="PROSITE" id="PS01122">
    <property type="entry name" value="CASPASE_CYS"/>
    <property type="match status" value="1"/>
</dbReference>
<dbReference type="PROSITE" id="PS01121">
    <property type="entry name" value="CASPASE_HIS"/>
    <property type="match status" value="1"/>
</dbReference>
<dbReference type="PROSITE" id="PS50207">
    <property type="entry name" value="CASPASE_P10"/>
    <property type="match status" value="1"/>
</dbReference>
<dbReference type="PROSITE" id="PS50208">
    <property type="entry name" value="CASPASE_P20"/>
    <property type="match status" value="1"/>
</dbReference>
<name>CASP1_RAT</name>
<keyword id="KW-0053">Apoptosis</keyword>
<keyword id="KW-1003">Cell membrane</keyword>
<keyword id="KW-0963">Cytoplasm</keyword>
<keyword id="KW-0378">Hydrolase</keyword>
<keyword id="KW-0472">Membrane</keyword>
<keyword id="KW-0597">Phosphoprotein</keyword>
<keyword id="KW-0645">Protease</keyword>
<keyword id="KW-1185">Reference proteome</keyword>
<keyword id="KW-0788">Thiol protease</keyword>
<keyword id="KW-0832">Ubl conjugation</keyword>
<keyword id="KW-0865">Zymogen</keyword>
<feature type="propeptide" id="PRO_0000004533" evidence="3">
    <location>
        <begin position="1"/>
        <end position="118" status="uncertain"/>
    </location>
</feature>
<feature type="chain" id="PRO_0000004534" description="Caspase-1 subunit p20" evidence="2">
    <location>
        <begin position="119" status="uncertain"/>
        <end position="296"/>
    </location>
</feature>
<feature type="propeptide" id="PRO_0000004535" evidence="3">
    <location>
        <begin position="297"/>
        <end position="314"/>
    </location>
</feature>
<feature type="chain" id="PRO_0000004536" description="Caspase-1 subunit p10" evidence="2">
    <location>
        <begin position="315"/>
        <end position="402"/>
    </location>
</feature>
<feature type="domain" description="CARD" evidence="4">
    <location>
        <begin position="1"/>
        <end position="91"/>
    </location>
</feature>
<feature type="active site" evidence="2">
    <location>
        <position position="236"/>
    </location>
</feature>
<feature type="active site" evidence="2">
    <location>
        <position position="284"/>
    </location>
</feature>
<feature type="modified residue" description="Phosphoserine" evidence="1">
    <location>
        <position position="301"/>
    </location>
</feature>
<feature type="sequence conflict" description="In Ref. 2; AAC52259/AAB35431." evidence="5" ref="2">
    <original>A</original>
    <variation>G</variation>
    <location>
        <position position="252"/>
    </location>
</feature>
<feature type="sequence conflict" description="In Ref. 2; AAC52259/AAB35431." evidence="5" ref="2">
    <original>K</original>
    <variation>E</variation>
    <location>
        <position position="256"/>
    </location>
</feature>
<feature type="sequence conflict" description="In Ref. 2; AAC52259/AAB35431." evidence="5" ref="2">
    <original>I</original>
    <variation>L</variation>
    <location>
        <position position="260"/>
    </location>
</feature>
<feature type="sequence conflict" description="In Ref. 2; AAC52259/AAB35431." evidence="5" ref="2">
    <original>Q</original>
    <variation>H</variation>
    <location>
        <position position="262"/>
    </location>
</feature>
<feature type="sequence conflict" description="In Ref. 2; AAC52259/AAB35431." evidence="5" ref="2">
    <original>R</original>
    <variation>Q</variation>
    <location>
        <position position="343"/>
    </location>
</feature>
<sequence length="402" mass="45576">MADKVLRAKRKQFINSVSVGTINGLLDELLEKRVLNQEEMDTIKLANITVMEKARDLCDHVTKKGPRASQMFITYICNEDCYLAEILELQSGPSAETVFVTEDSKGGHPFSSETKEKLNKEGGAFPGPSGSLKFCPLEIAQKLWKENHSEIYPIMKTPTRTRLALIICNTDFQHLSRRVGADVDLREMKLLLQDLGYTVKVKENLTALEMTKELKEFAACPEHKTSDSTFLVFMSHGLQEGICGITYSNEVADILKVDTIFQMMNTLKCPSLKDKPKVIIIQACRGEKQGVVLLKDSVGNSEEGFLTDAIFEDDGIKKAHIEKDFIAFCSSTPDNVSWRHPVRGSLFIESLIKHMKEYAWSCDLEDIFRKVRFSFEQPDSRLQMPTTERVTLTKRFYLFPGH</sequence>
<organism>
    <name type="scientific">Rattus norvegicus</name>
    <name type="common">Rat</name>
    <dbReference type="NCBI Taxonomy" id="10116"/>
    <lineage>
        <taxon>Eukaryota</taxon>
        <taxon>Metazoa</taxon>
        <taxon>Chordata</taxon>
        <taxon>Craniata</taxon>
        <taxon>Vertebrata</taxon>
        <taxon>Euteleostomi</taxon>
        <taxon>Mammalia</taxon>
        <taxon>Eutheria</taxon>
        <taxon>Euarchontoglires</taxon>
        <taxon>Glires</taxon>
        <taxon>Rodentia</taxon>
        <taxon>Myomorpha</taxon>
        <taxon>Muroidea</taxon>
        <taxon>Muridae</taxon>
        <taxon>Murinae</taxon>
        <taxon>Rattus</taxon>
    </lineage>
</organism>
<protein>
    <recommendedName>
        <fullName>Caspase-1</fullName>
        <shortName>CASP-1</shortName>
        <ecNumber evidence="2">3.4.22.36</ecNumber>
    </recommendedName>
    <alternativeName>
        <fullName>Interleukin-1 beta convertase</fullName>
        <shortName>IL-1BC</shortName>
    </alternativeName>
    <alternativeName>
        <fullName>Interleukin-1 beta-converting enzyme</fullName>
        <shortName>ICE</shortName>
        <shortName>IL-1 beta-converting enzyme</shortName>
    </alternativeName>
    <alternativeName>
        <fullName>p45</fullName>
    </alternativeName>
    <component>
        <recommendedName>
            <fullName evidence="2">Caspase-1 subunit p20</fullName>
        </recommendedName>
    </component>
    <component>
        <recommendedName>
            <fullName evidence="2">Caspase-1 subunit p10</fullName>
        </recommendedName>
    </component>
</protein>
<reference key="1">
    <citation type="journal article" date="1995" name="Cytokine">
        <title>Cloning, tissue expression and regulation of rat interleukin 1 beta converting enzyme.</title>
        <authorList>
            <person name="Keane K.M."/>
            <person name="Giegel D.A."/>
            <person name="Lipinski W.J."/>
            <person name="Callahan M.J."/>
            <person name="Shivers B.D."/>
        </authorList>
    </citation>
    <scope>NUCLEOTIDE SEQUENCE [MRNA]</scope>
    <source>
        <tissue>Spleen</tissue>
    </source>
</reference>
<reference key="2">
    <citation type="journal article" date="1995" name="Endocrinology">
        <title>Interleukin-1 beta-converting enzyme-related proteases (IRPs) and mammalian cell death: dissociation of IRP-induced oligonucleosomal endonuclease activity from morphological apoptosis in granulosa cells of the ovarian follicle.</title>
        <authorList>
            <person name="Flaws J.A."/>
            <person name="Kugu K."/>
            <person name="Trbovich A.M."/>
            <person name="Desanti A."/>
            <person name="Tilly K.I."/>
            <person name="Hirshfield A.N."/>
            <person name="Tilly J.L."/>
        </authorList>
    </citation>
    <scope>NUCLEOTIDE SEQUENCE [MRNA] OF 228-362</scope>
    <source>
        <tissue>Ovary</tissue>
    </source>
</reference>
<accession>P43527</accession>
<evidence type="ECO:0000250" key="1">
    <source>
        <dbReference type="UniProtKB" id="P29452"/>
    </source>
</evidence>
<evidence type="ECO:0000250" key="2">
    <source>
        <dbReference type="UniProtKB" id="P29466"/>
    </source>
</evidence>
<evidence type="ECO:0000255" key="3"/>
<evidence type="ECO:0000255" key="4">
    <source>
        <dbReference type="PROSITE-ProRule" id="PRU00046"/>
    </source>
</evidence>
<evidence type="ECO:0000305" key="5"/>
<comment type="function">
    <text evidence="2">Thiol protease involved in a variety of inflammatory processes by proteolytically cleaving other proteins, such as the precursors of the inflammatory cytokines interleukin-1 beta (IL1B) and interleukin 18 (IL18) as well as the pyroptosis inducer Gasdermin-D (GSDMD), into active mature peptides. Plays a key role in cell immunity as an inflammatory response initiator: once activated through formation of an inflammasome complex, it initiates a pro-inflammatory response through the cleavage of the two inflammatory cytokines IL1B and IL18, releasing the mature cytokines which are involved in a variety of inflammatory processes. Cleaves a tetrapeptide after an Asp residue at position P1. Also initiates pyroptosis, a programmed lytic cell death pathway, through cleavage of GSDMD. In contrast to cleavage of interleukin IL1B, recognition and cleavage of GSDMD is not strictly dependent on the consensus cleavage site but depends on an exosite interface on CASP1 that recognizes and binds the Gasdermin-D, C-terminal (GSDMD-CT) part. Cleaves and activates CASP7 in response to bacterial infection, promoting plasma membrane repair. Upon inflammasome activation, during DNA virus infection but not RNA virus challenge, controls antiviral immunity through the cleavage of CGAS, rendering it inactive. In apoptotic cells, cleaves SPHK2 which is released from cells and remains enzymatically active extracellularly.</text>
</comment>
<comment type="catalytic activity">
    <reaction evidence="2">
        <text>Strict requirement for an Asp residue at position P1 and has a preferred cleavage sequence of Tyr-Val-Ala-Asp-|-.</text>
        <dbReference type="EC" id="3.4.22.36"/>
    </reaction>
</comment>
<comment type="subunit">
    <text evidence="1 2">Heterotetramer that consists of two anti-parallel arranged heterodimers, each one formed by a 20 kDa (Caspase-1 subunit p20) and a 10 kDa (Caspase-1 subunit p10) subunit. May be a component of the inflammasome, a protein complex which also includes PYCARD, CARD8 and NLRP2 and whose function would be the activation of pro-inflammatory caspases. Component of the AIM2 PANoptosome complex, a multiprotein complex that drives inflammatory cell death (PANoptosis). Both the p10 and p20 subunits interact with MEFV. Interacts with CARD17P/INCA and CARD18. Interacts with SERPINB1; this interaction regulates CASP1 activity.</text>
</comment>
<comment type="subunit">
    <molecule>Caspase-1 subunit p20</molecule>
    <text evidence="2">Heterotetramer that consists of two anti-parallel arranged heterodimers, each one formed by a 20 kDa (Caspase-1 subunit p20) and a 10 kDa (Caspase-1 subunit p10) subunit.</text>
</comment>
<comment type="subunit">
    <molecule>Caspase-1 subunit p10</molecule>
    <text evidence="2">Heterotetramer that consists of two anti-parallel arranged heterodimers, each one formed by a 20 kDa (Caspase-1 subunit p20) and a 10 kDa (Caspase-1 subunit p10) subunit.</text>
</comment>
<comment type="subcellular location">
    <subcellularLocation>
        <location evidence="2">Cytoplasm</location>
    </subcellularLocation>
    <subcellularLocation>
        <location evidence="2">Cell membrane</location>
    </subcellularLocation>
</comment>
<comment type="PTM">
    <text evidence="2">The two subunits are derived from the precursor sequence by an autocatalytic mechanism.</text>
</comment>
<comment type="PTM">
    <text evidence="2">Ubiquitinated via 'Lys-11'-linked polyubiquitination. Deubiquitinated by USP8.</text>
</comment>
<comment type="similarity">
    <text evidence="5">Belongs to the peptidase C14A family.</text>
</comment>
<gene>
    <name type="primary">Casp1</name>
    <name type="synonym">Il1bc</name>
    <name type="synonym">Il1bce</name>
</gene>